<feature type="chain" id="PRO_1000202800" description="Holo-[acyl-carrier-protein] synthase">
    <location>
        <begin position="1"/>
        <end position="126"/>
    </location>
</feature>
<feature type="binding site" evidence="1">
    <location>
        <position position="8"/>
    </location>
    <ligand>
        <name>Mg(2+)</name>
        <dbReference type="ChEBI" id="CHEBI:18420"/>
    </ligand>
</feature>
<feature type="binding site" evidence="1">
    <location>
        <position position="50"/>
    </location>
    <ligand>
        <name>Mg(2+)</name>
        <dbReference type="ChEBI" id="CHEBI:18420"/>
    </ligand>
</feature>
<protein>
    <recommendedName>
        <fullName evidence="1">Holo-[acyl-carrier-protein] synthase</fullName>
        <shortName evidence="1">Holo-ACP synthase</shortName>
        <ecNumber evidence="1">2.7.8.7</ecNumber>
    </recommendedName>
    <alternativeName>
        <fullName evidence="1">4'-phosphopantetheinyl transferase AcpS</fullName>
    </alternativeName>
</protein>
<proteinExistence type="inferred from homology"/>
<reference key="1">
    <citation type="journal article" date="2010" name="J. Bacteriol.">
        <title>Genome sequence of the Fleming strain of Micrococcus luteus, a simple free-living actinobacterium.</title>
        <authorList>
            <person name="Young M."/>
            <person name="Artsatbanov V."/>
            <person name="Beller H.R."/>
            <person name="Chandra G."/>
            <person name="Chater K.F."/>
            <person name="Dover L.G."/>
            <person name="Goh E.B."/>
            <person name="Kahan T."/>
            <person name="Kaprelyants A.S."/>
            <person name="Kyrpides N."/>
            <person name="Lapidus A."/>
            <person name="Lowry S.R."/>
            <person name="Lykidis A."/>
            <person name="Mahillon J."/>
            <person name="Markowitz V."/>
            <person name="Mavromatis K."/>
            <person name="Mukamolova G.V."/>
            <person name="Oren A."/>
            <person name="Rokem J.S."/>
            <person name="Smith M.C."/>
            <person name="Young D.I."/>
            <person name="Greenblatt C.L."/>
        </authorList>
    </citation>
    <scope>NUCLEOTIDE SEQUENCE [LARGE SCALE GENOMIC DNA]</scope>
    <source>
        <strain>ATCC 4698 / DSM 20030 / JCM 1464 / CCM 169 / CCUG 5858 / IAM 1056 / NBRC 3333 / NCIMB 9278 / NCTC 2665 / VKM Ac-2230</strain>
    </source>
</reference>
<sequence>MIVGVGVDVVDVPRFRAQLERTPALRARLFTEDERDLPLRSLAARFAAKEAIAKAMGAPPGMMWHHCWIPRPDHGDGRPTVHLTGTVQAQAEALGITHWHLSLSHDGDVATAYVVAERRAAEEESA</sequence>
<gene>
    <name evidence="1" type="primary">acpS</name>
    <name type="ordered locus">Mlut_16740</name>
</gene>
<dbReference type="EC" id="2.7.8.7" evidence="1"/>
<dbReference type="EMBL" id="CP001628">
    <property type="protein sequence ID" value="ACS31162.1"/>
    <property type="molecule type" value="Genomic_DNA"/>
</dbReference>
<dbReference type="RefSeq" id="WP_010080417.1">
    <property type="nucleotide sequence ID" value="NZ_WBMF01000001.1"/>
</dbReference>
<dbReference type="SMR" id="C5CC21"/>
<dbReference type="STRING" id="465515.Mlut_16740"/>
<dbReference type="EnsemblBacteria" id="ACS31162">
    <property type="protein sequence ID" value="ACS31162"/>
    <property type="gene ID" value="Mlut_16740"/>
</dbReference>
<dbReference type="KEGG" id="mlu:Mlut_16740"/>
<dbReference type="eggNOG" id="COG0736">
    <property type="taxonomic scope" value="Bacteria"/>
</dbReference>
<dbReference type="HOGENOM" id="CLU_089696_0_0_11"/>
<dbReference type="Proteomes" id="UP000000738">
    <property type="component" value="Chromosome"/>
</dbReference>
<dbReference type="GO" id="GO:0005737">
    <property type="term" value="C:cytoplasm"/>
    <property type="evidence" value="ECO:0007669"/>
    <property type="project" value="UniProtKB-SubCell"/>
</dbReference>
<dbReference type="GO" id="GO:0008897">
    <property type="term" value="F:holo-[acyl-carrier-protein] synthase activity"/>
    <property type="evidence" value="ECO:0007669"/>
    <property type="project" value="UniProtKB-UniRule"/>
</dbReference>
<dbReference type="GO" id="GO:0000287">
    <property type="term" value="F:magnesium ion binding"/>
    <property type="evidence" value="ECO:0007669"/>
    <property type="project" value="UniProtKB-UniRule"/>
</dbReference>
<dbReference type="GO" id="GO:0006633">
    <property type="term" value="P:fatty acid biosynthetic process"/>
    <property type="evidence" value="ECO:0007669"/>
    <property type="project" value="UniProtKB-UniRule"/>
</dbReference>
<dbReference type="Gene3D" id="3.90.470.20">
    <property type="entry name" value="4'-phosphopantetheinyl transferase domain"/>
    <property type="match status" value="1"/>
</dbReference>
<dbReference type="HAMAP" id="MF_00101">
    <property type="entry name" value="AcpS"/>
    <property type="match status" value="1"/>
</dbReference>
<dbReference type="InterPro" id="IPR008278">
    <property type="entry name" value="4-PPantetheinyl_Trfase_dom"/>
</dbReference>
<dbReference type="InterPro" id="IPR037143">
    <property type="entry name" value="4-PPantetheinyl_Trfase_dom_sf"/>
</dbReference>
<dbReference type="InterPro" id="IPR002582">
    <property type="entry name" value="ACPS"/>
</dbReference>
<dbReference type="InterPro" id="IPR004568">
    <property type="entry name" value="Ppantetheine-prot_Trfase_dom"/>
</dbReference>
<dbReference type="NCBIfam" id="TIGR00556">
    <property type="entry name" value="pantethn_trn"/>
    <property type="match status" value="1"/>
</dbReference>
<dbReference type="NCBIfam" id="NF000832">
    <property type="entry name" value="PRK00070.3-2"/>
    <property type="match status" value="1"/>
</dbReference>
<dbReference type="Pfam" id="PF01648">
    <property type="entry name" value="ACPS"/>
    <property type="match status" value="1"/>
</dbReference>
<dbReference type="SUPFAM" id="SSF56214">
    <property type="entry name" value="4'-phosphopantetheinyl transferase"/>
    <property type="match status" value="1"/>
</dbReference>
<evidence type="ECO:0000255" key="1">
    <source>
        <dbReference type="HAMAP-Rule" id="MF_00101"/>
    </source>
</evidence>
<name>ACPS_MICLC</name>
<keyword id="KW-0963">Cytoplasm</keyword>
<keyword id="KW-0275">Fatty acid biosynthesis</keyword>
<keyword id="KW-0276">Fatty acid metabolism</keyword>
<keyword id="KW-0444">Lipid biosynthesis</keyword>
<keyword id="KW-0443">Lipid metabolism</keyword>
<keyword id="KW-0460">Magnesium</keyword>
<keyword id="KW-0479">Metal-binding</keyword>
<keyword id="KW-1185">Reference proteome</keyword>
<keyword id="KW-0808">Transferase</keyword>
<comment type="function">
    <text evidence="1">Transfers the 4'-phosphopantetheine moiety from coenzyme A to a Ser of acyl-carrier-protein.</text>
</comment>
<comment type="catalytic activity">
    <reaction evidence="1">
        <text>apo-[ACP] + CoA = holo-[ACP] + adenosine 3',5'-bisphosphate + H(+)</text>
        <dbReference type="Rhea" id="RHEA:12068"/>
        <dbReference type="Rhea" id="RHEA-COMP:9685"/>
        <dbReference type="Rhea" id="RHEA-COMP:9690"/>
        <dbReference type="ChEBI" id="CHEBI:15378"/>
        <dbReference type="ChEBI" id="CHEBI:29999"/>
        <dbReference type="ChEBI" id="CHEBI:57287"/>
        <dbReference type="ChEBI" id="CHEBI:58343"/>
        <dbReference type="ChEBI" id="CHEBI:64479"/>
        <dbReference type="EC" id="2.7.8.7"/>
    </reaction>
</comment>
<comment type="cofactor">
    <cofactor evidence="1">
        <name>Mg(2+)</name>
        <dbReference type="ChEBI" id="CHEBI:18420"/>
    </cofactor>
</comment>
<comment type="subcellular location">
    <subcellularLocation>
        <location evidence="1">Cytoplasm</location>
    </subcellularLocation>
</comment>
<comment type="similarity">
    <text evidence="1">Belongs to the P-Pant transferase superfamily. AcpS family.</text>
</comment>
<organism>
    <name type="scientific">Micrococcus luteus (strain ATCC 4698 / DSM 20030 / JCM 1464 / CCM 169 / CCUG 5858 / IAM 1056 / NBRC 3333 / NCIMB 9278 / NCTC 2665 / VKM Ac-2230)</name>
    <name type="common">Micrococcus lysodeikticus</name>
    <dbReference type="NCBI Taxonomy" id="465515"/>
    <lineage>
        <taxon>Bacteria</taxon>
        <taxon>Bacillati</taxon>
        <taxon>Actinomycetota</taxon>
        <taxon>Actinomycetes</taxon>
        <taxon>Micrococcales</taxon>
        <taxon>Micrococcaceae</taxon>
        <taxon>Micrococcus</taxon>
    </lineage>
</organism>
<accession>C5CC21</accession>